<reference key="1">
    <citation type="journal article" date="2002" name="Nature">
        <title>The genome sequence of Schizosaccharomyces pombe.</title>
        <authorList>
            <person name="Wood V."/>
            <person name="Gwilliam R."/>
            <person name="Rajandream M.A."/>
            <person name="Lyne M.H."/>
            <person name="Lyne R."/>
            <person name="Stewart A."/>
            <person name="Sgouros J.G."/>
            <person name="Peat N."/>
            <person name="Hayles J."/>
            <person name="Baker S.G."/>
            <person name="Basham D."/>
            <person name="Bowman S."/>
            <person name="Brooks K."/>
            <person name="Brown D."/>
            <person name="Brown S."/>
            <person name="Chillingworth T."/>
            <person name="Churcher C.M."/>
            <person name="Collins M."/>
            <person name="Connor R."/>
            <person name="Cronin A."/>
            <person name="Davis P."/>
            <person name="Feltwell T."/>
            <person name="Fraser A."/>
            <person name="Gentles S."/>
            <person name="Goble A."/>
            <person name="Hamlin N."/>
            <person name="Harris D.E."/>
            <person name="Hidalgo J."/>
            <person name="Hodgson G."/>
            <person name="Holroyd S."/>
            <person name="Hornsby T."/>
            <person name="Howarth S."/>
            <person name="Huckle E.J."/>
            <person name="Hunt S."/>
            <person name="Jagels K."/>
            <person name="James K.D."/>
            <person name="Jones L."/>
            <person name="Jones M."/>
            <person name="Leather S."/>
            <person name="McDonald S."/>
            <person name="McLean J."/>
            <person name="Mooney P."/>
            <person name="Moule S."/>
            <person name="Mungall K.L."/>
            <person name="Murphy L.D."/>
            <person name="Niblett D."/>
            <person name="Odell C."/>
            <person name="Oliver K."/>
            <person name="O'Neil S."/>
            <person name="Pearson D."/>
            <person name="Quail M.A."/>
            <person name="Rabbinowitsch E."/>
            <person name="Rutherford K.M."/>
            <person name="Rutter S."/>
            <person name="Saunders D."/>
            <person name="Seeger K."/>
            <person name="Sharp S."/>
            <person name="Skelton J."/>
            <person name="Simmonds M.N."/>
            <person name="Squares R."/>
            <person name="Squares S."/>
            <person name="Stevens K."/>
            <person name="Taylor K."/>
            <person name="Taylor R.G."/>
            <person name="Tivey A."/>
            <person name="Walsh S.V."/>
            <person name="Warren T."/>
            <person name="Whitehead S."/>
            <person name="Woodward J.R."/>
            <person name="Volckaert G."/>
            <person name="Aert R."/>
            <person name="Robben J."/>
            <person name="Grymonprez B."/>
            <person name="Weltjens I."/>
            <person name="Vanstreels E."/>
            <person name="Rieger M."/>
            <person name="Schaefer M."/>
            <person name="Mueller-Auer S."/>
            <person name="Gabel C."/>
            <person name="Fuchs M."/>
            <person name="Duesterhoeft A."/>
            <person name="Fritzc C."/>
            <person name="Holzer E."/>
            <person name="Moestl D."/>
            <person name="Hilbert H."/>
            <person name="Borzym K."/>
            <person name="Langer I."/>
            <person name="Beck A."/>
            <person name="Lehrach H."/>
            <person name="Reinhardt R."/>
            <person name="Pohl T.M."/>
            <person name="Eger P."/>
            <person name="Zimmermann W."/>
            <person name="Wedler H."/>
            <person name="Wambutt R."/>
            <person name="Purnelle B."/>
            <person name="Goffeau A."/>
            <person name="Cadieu E."/>
            <person name="Dreano S."/>
            <person name="Gloux S."/>
            <person name="Lelaure V."/>
            <person name="Mottier S."/>
            <person name="Galibert F."/>
            <person name="Aves S.J."/>
            <person name="Xiang Z."/>
            <person name="Hunt C."/>
            <person name="Moore K."/>
            <person name="Hurst S.M."/>
            <person name="Lucas M."/>
            <person name="Rochet M."/>
            <person name="Gaillardin C."/>
            <person name="Tallada V.A."/>
            <person name="Garzon A."/>
            <person name="Thode G."/>
            <person name="Daga R.R."/>
            <person name="Cruzado L."/>
            <person name="Jimenez J."/>
            <person name="Sanchez M."/>
            <person name="del Rey F."/>
            <person name="Benito J."/>
            <person name="Dominguez A."/>
            <person name="Revuelta J.L."/>
            <person name="Moreno S."/>
            <person name="Armstrong J."/>
            <person name="Forsburg S.L."/>
            <person name="Cerutti L."/>
            <person name="Lowe T."/>
            <person name="McCombie W.R."/>
            <person name="Paulsen I."/>
            <person name="Potashkin J."/>
            <person name="Shpakovski G.V."/>
            <person name="Ussery D."/>
            <person name="Barrell B.G."/>
            <person name="Nurse P."/>
        </authorList>
    </citation>
    <scope>NUCLEOTIDE SEQUENCE [LARGE SCALE GENOMIC DNA]</scope>
    <source>
        <strain>972 / ATCC 24843</strain>
    </source>
</reference>
<reference key="2">
    <citation type="journal article" date="2006" name="Nat. Biotechnol.">
        <title>ORFeome cloning and global analysis of protein localization in the fission yeast Schizosaccharomyces pombe.</title>
        <authorList>
            <person name="Matsuyama A."/>
            <person name="Arai R."/>
            <person name="Yashiroda Y."/>
            <person name="Shirai A."/>
            <person name="Kamata A."/>
            <person name="Sekido S."/>
            <person name="Kobayashi Y."/>
            <person name="Hashimoto A."/>
            <person name="Hamamoto M."/>
            <person name="Hiraoka Y."/>
            <person name="Horinouchi S."/>
            <person name="Yoshida M."/>
        </authorList>
    </citation>
    <scope>SUBCELLULAR LOCATION [LARGE SCALE ANALYSIS]</scope>
</reference>
<evidence type="ECO:0000250" key="1"/>
<evidence type="ECO:0000255" key="2"/>
<evidence type="ECO:0000269" key="3">
    <source>
    </source>
</evidence>
<evidence type="ECO:0000305" key="4"/>
<feature type="chain" id="PRO_0000339145" description="Golgi apparatus membrane protein tvp15">
    <location>
        <begin position="1"/>
        <end position="132"/>
    </location>
</feature>
<feature type="topological domain" description="Cytoplasmic" evidence="1">
    <location>
        <begin position="1"/>
        <end position="3"/>
    </location>
</feature>
<feature type="transmembrane region" description="Helical" evidence="2">
    <location>
        <begin position="4"/>
        <end position="24"/>
    </location>
</feature>
<feature type="topological domain" description="Lumenal" evidence="1">
    <location>
        <position position="25"/>
    </location>
</feature>
<feature type="transmembrane region" description="Helical" evidence="2">
    <location>
        <begin position="26"/>
        <end position="46"/>
    </location>
</feature>
<feature type="topological domain" description="Cytoplasmic" evidence="1">
    <location>
        <begin position="47"/>
        <end position="56"/>
    </location>
</feature>
<feature type="transmembrane region" description="Helical" evidence="2">
    <location>
        <begin position="57"/>
        <end position="77"/>
    </location>
</feature>
<feature type="topological domain" description="Lumenal" evidence="1">
    <location>
        <begin position="78"/>
        <end position="89"/>
    </location>
</feature>
<feature type="transmembrane region" description="Helical" evidence="2">
    <location>
        <begin position="90"/>
        <end position="112"/>
    </location>
</feature>
<feature type="topological domain" description="Cytoplasmic" evidence="1">
    <location>
        <begin position="113"/>
        <end position="132"/>
    </location>
</feature>
<accession>O14223</accession>
<sequence>MDKTKMFSAINLGVGGIFVLSGFIKLFSFSFVNALLALFIIVFGLGTIGLEKEIPPIAIKYGSFMFSFLGRGFFYAFMGTLLFSYSGFTSFLGFLVLLAGIAYCGANYVAGLQDYAPRSMRDNDWDDNVDEV</sequence>
<proteinExistence type="inferred from homology"/>
<dbReference type="EMBL" id="CU329670">
    <property type="protein sequence ID" value="CAB11088.1"/>
    <property type="molecule type" value="Genomic_DNA"/>
</dbReference>
<dbReference type="PIR" id="T11655">
    <property type="entry name" value="T11655"/>
</dbReference>
<dbReference type="RefSeq" id="NP_593290.1">
    <property type="nucleotide sequence ID" value="NM_001018720.2"/>
</dbReference>
<dbReference type="SMR" id="O14223"/>
<dbReference type="BioGRID" id="279183">
    <property type="interactions" value="20"/>
</dbReference>
<dbReference type="FunCoup" id="O14223">
    <property type="interactions" value="49"/>
</dbReference>
<dbReference type="IntAct" id="O14223">
    <property type="interactions" value="2"/>
</dbReference>
<dbReference type="STRING" id="284812.O14223"/>
<dbReference type="PaxDb" id="4896-SPAC6F12.04.1"/>
<dbReference type="EnsemblFungi" id="SPAC6F12.04.1">
    <property type="protein sequence ID" value="SPAC6F12.04.1:pep"/>
    <property type="gene ID" value="SPAC6F12.04"/>
</dbReference>
<dbReference type="GeneID" id="2542733"/>
<dbReference type="KEGG" id="spo:2542733"/>
<dbReference type="PomBase" id="SPAC6F12.04">
    <property type="gene designation" value="tvp15"/>
</dbReference>
<dbReference type="VEuPathDB" id="FungiDB:SPAC6F12.04"/>
<dbReference type="eggNOG" id="ENOG502S6ZT">
    <property type="taxonomic scope" value="Eukaryota"/>
</dbReference>
<dbReference type="HOGENOM" id="CLU_120579_0_0_1"/>
<dbReference type="InParanoid" id="O14223"/>
<dbReference type="OMA" id="MDYSDAF"/>
<dbReference type="PhylomeDB" id="O14223"/>
<dbReference type="PRO" id="PR:O14223"/>
<dbReference type="Proteomes" id="UP000002485">
    <property type="component" value="Chromosome I"/>
</dbReference>
<dbReference type="GO" id="GO:0030137">
    <property type="term" value="C:COPI-coated vesicle"/>
    <property type="evidence" value="ECO:0000266"/>
    <property type="project" value="PomBase"/>
</dbReference>
<dbReference type="GO" id="GO:0005794">
    <property type="term" value="C:Golgi apparatus"/>
    <property type="evidence" value="ECO:0007005"/>
    <property type="project" value="PomBase"/>
</dbReference>
<dbReference type="GO" id="GO:0000139">
    <property type="term" value="C:Golgi membrane"/>
    <property type="evidence" value="ECO:0000318"/>
    <property type="project" value="GO_Central"/>
</dbReference>
<dbReference type="GO" id="GO:0016192">
    <property type="term" value="P:vesicle-mediated transport"/>
    <property type="evidence" value="ECO:0000318"/>
    <property type="project" value="GO_Central"/>
</dbReference>
<dbReference type="InterPro" id="IPR013714">
    <property type="entry name" value="Golgi_TVP15"/>
</dbReference>
<dbReference type="PANTHER" id="PTHR28128">
    <property type="entry name" value="GOLGI APPARATUS MEMBRANE PROTEIN TVP15"/>
    <property type="match status" value="1"/>
</dbReference>
<dbReference type="PANTHER" id="PTHR28128:SF1">
    <property type="entry name" value="GOLGI APPARATUS MEMBRANE PROTEIN TVP15"/>
    <property type="match status" value="1"/>
</dbReference>
<dbReference type="Pfam" id="PF08507">
    <property type="entry name" value="COPI_assoc"/>
    <property type="match status" value="1"/>
</dbReference>
<protein>
    <recommendedName>
        <fullName>Golgi apparatus membrane protein tvp15</fullName>
    </recommendedName>
</protein>
<keyword id="KW-0333">Golgi apparatus</keyword>
<keyword id="KW-0472">Membrane</keyword>
<keyword id="KW-1185">Reference proteome</keyword>
<keyword id="KW-0812">Transmembrane</keyword>
<keyword id="KW-1133">Transmembrane helix</keyword>
<name>TVP15_SCHPO</name>
<comment type="function">
    <text evidence="1">Golgi membrane protein involved in vesicular trafficking.</text>
</comment>
<comment type="subcellular location">
    <subcellularLocation>
        <location evidence="3">Golgi apparatus membrane</location>
        <topology evidence="3">Multi-pass membrane protein</topology>
    </subcellularLocation>
</comment>
<comment type="similarity">
    <text evidence="4">Belongs to the TVP15 family.</text>
</comment>
<gene>
    <name type="primary">tvp15</name>
    <name type="ORF">SPAC6F12.04</name>
</gene>
<organism>
    <name type="scientific">Schizosaccharomyces pombe (strain 972 / ATCC 24843)</name>
    <name type="common">Fission yeast</name>
    <dbReference type="NCBI Taxonomy" id="284812"/>
    <lineage>
        <taxon>Eukaryota</taxon>
        <taxon>Fungi</taxon>
        <taxon>Dikarya</taxon>
        <taxon>Ascomycota</taxon>
        <taxon>Taphrinomycotina</taxon>
        <taxon>Schizosaccharomycetes</taxon>
        <taxon>Schizosaccharomycetales</taxon>
        <taxon>Schizosaccharomycetaceae</taxon>
        <taxon>Schizosaccharomyces</taxon>
    </lineage>
</organism>